<accession>Q2U600</accession>
<name>BCP1_ASPOR</name>
<protein>
    <recommendedName>
        <fullName>Protein bcp1</fullName>
    </recommendedName>
</protein>
<gene>
    <name type="primary">bcp1</name>
    <name type="ORF">AO090120000437</name>
</gene>
<proteinExistence type="inferred from homology"/>
<comment type="function">
    <text evidence="1">Involved in nuclear export, actin cytoskeleton organization and vesicular transport.</text>
</comment>
<comment type="subcellular location">
    <subcellularLocation>
        <location evidence="2">Cytoplasm</location>
    </subcellularLocation>
    <subcellularLocation>
        <location evidence="2">Nucleus</location>
    </subcellularLocation>
</comment>
<comment type="similarity">
    <text evidence="4">Belongs to the BCP1 family.</text>
</comment>
<feature type="chain" id="PRO_0000249697" description="Protein bcp1">
    <location>
        <begin position="1"/>
        <end position="290"/>
    </location>
</feature>
<feature type="region of interest" description="Disordered" evidence="3">
    <location>
        <begin position="1"/>
        <end position="27"/>
    </location>
</feature>
<feature type="compositionally biased region" description="Basic and acidic residues" evidence="3">
    <location>
        <begin position="1"/>
        <end position="11"/>
    </location>
</feature>
<evidence type="ECO:0000250" key="1"/>
<evidence type="ECO:0000250" key="2">
    <source>
        <dbReference type="UniProtKB" id="Q06338"/>
    </source>
</evidence>
<evidence type="ECO:0000256" key="3">
    <source>
        <dbReference type="SAM" id="MobiDB-lite"/>
    </source>
</evidence>
<evidence type="ECO:0000305" key="4"/>
<sequence length="290" mass="33206">MGKRKEIKDNDVEMGGTDPRVDGDESDEDMDIVNVDFEWFDPQPIDFHGLKILLRQLFDSDAQIFDMSALSDMILAQPLLGSTVKVDGNESDPYAFLTVLNLQEHKDKPVIKDLISYLQRKASSNPDLAPLSQLLSQTPVPPIGLILTERLINMPAEVVPPMYTMLMEEIAWAIQDKEPYKFSHYLIVSKNYEEVQSKLDMEDSRPQKKKKKSGDKVEKFYFHPEDEILEKHTRCFGSIEYTHKHDEGHSDSKRAFQELGIRTNGSLMLFDADKLEGAINEMKEFLQPPV</sequence>
<dbReference type="EMBL" id="BA000053">
    <property type="protein sequence ID" value="BAE63015.1"/>
    <property type="molecule type" value="Genomic_DNA"/>
</dbReference>
<dbReference type="RefSeq" id="XP_001824148.1">
    <property type="nucleotide sequence ID" value="XM_001824096.1"/>
</dbReference>
<dbReference type="SMR" id="Q2U600"/>
<dbReference type="STRING" id="510516.Q2U600"/>
<dbReference type="EnsemblFungi" id="BAE63015">
    <property type="protein sequence ID" value="BAE63015"/>
    <property type="gene ID" value="AO090120000437"/>
</dbReference>
<dbReference type="GeneID" id="5996407"/>
<dbReference type="KEGG" id="aor:AO090120000437"/>
<dbReference type="VEuPathDB" id="FungiDB:AO090120000437"/>
<dbReference type="HOGENOM" id="CLU_068770_2_0_1"/>
<dbReference type="OMA" id="VKFYRKE"/>
<dbReference type="OrthoDB" id="47125at5052"/>
<dbReference type="Proteomes" id="UP000006564">
    <property type="component" value="Chromosome 5"/>
</dbReference>
<dbReference type="GO" id="GO:0005737">
    <property type="term" value="C:cytoplasm"/>
    <property type="evidence" value="ECO:0007669"/>
    <property type="project" value="UniProtKB-SubCell"/>
</dbReference>
<dbReference type="GO" id="GO:0005634">
    <property type="term" value="C:nucleus"/>
    <property type="evidence" value="ECO:0007669"/>
    <property type="project" value="UniProtKB-SubCell"/>
</dbReference>
<dbReference type="GO" id="GO:0015031">
    <property type="term" value="P:protein transport"/>
    <property type="evidence" value="ECO:0007669"/>
    <property type="project" value="UniProtKB-KW"/>
</dbReference>
<dbReference type="InterPro" id="IPR025602">
    <property type="entry name" value="BCP1_family"/>
</dbReference>
<dbReference type="PANTHER" id="PTHR13261">
    <property type="entry name" value="BRCA2 AND CDKN1A INTERACTING PROTEIN"/>
    <property type="match status" value="1"/>
</dbReference>
<dbReference type="PANTHER" id="PTHR13261:SF0">
    <property type="entry name" value="BRCA2 AND CDKN1A-INTERACTING PROTEIN"/>
    <property type="match status" value="1"/>
</dbReference>
<dbReference type="Pfam" id="PF13862">
    <property type="entry name" value="BCCIP"/>
    <property type="match status" value="1"/>
</dbReference>
<dbReference type="PIRSF" id="PIRSF028983">
    <property type="entry name" value="BCP1"/>
    <property type="match status" value="1"/>
</dbReference>
<reference key="1">
    <citation type="journal article" date="2005" name="Nature">
        <title>Genome sequencing and analysis of Aspergillus oryzae.</title>
        <authorList>
            <person name="Machida M."/>
            <person name="Asai K."/>
            <person name="Sano M."/>
            <person name="Tanaka T."/>
            <person name="Kumagai T."/>
            <person name="Terai G."/>
            <person name="Kusumoto K."/>
            <person name="Arima T."/>
            <person name="Akita O."/>
            <person name="Kashiwagi Y."/>
            <person name="Abe K."/>
            <person name="Gomi K."/>
            <person name="Horiuchi H."/>
            <person name="Kitamoto K."/>
            <person name="Kobayashi T."/>
            <person name="Takeuchi M."/>
            <person name="Denning D.W."/>
            <person name="Galagan J.E."/>
            <person name="Nierman W.C."/>
            <person name="Yu J."/>
            <person name="Archer D.B."/>
            <person name="Bennett J.W."/>
            <person name="Bhatnagar D."/>
            <person name="Cleveland T.E."/>
            <person name="Fedorova N.D."/>
            <person name="Gotoh O."/>
            <person name="Horikawa H."/>
            <person name="Hosoyama A."/>
            <person name="Ichinomiya M."/>
            <person name="Igarashi R."/>
            <person name="Iwashita K."/>
            <person name="Juvvadi P.R."/>
            <person name="Kato M."/>
            <person name="Kato Y."/>
            <person name="Kin T."/>
            <person name="Kokubun A."/>
            <person name="Maeda H."/>
            <person name="Maeyama N."/>
            <person name="Maruyama J."/>
            <person name="Nagasaki H."/>
            <person name="Nakajima T."/>
            <person name="Oda K."/>
            <person name="Okada K."/>
            <person name="Paulsen I."/>
            <person name="Sakamoto K."/>
            <person name="Sawano T."/>
            <person name="Takahashi M."/>
            <person name="Takase K."/>
            <person name="Terabayashi Y."/>
            <person name="Wortman J.R."/>
            <person name="Yamada O."/>
            <person name="Yamagata Y."/>
            <person name="Anazawa H."/>
            <person name="Hata Y."/>
            <person name="Koide Y."/>
            <person name="Komori T."/>
            <person name="Koyama Y."/>
            <person name="Minetoki T."/>
            <person name="Suharnan S."/>
            <person name="Tanaka A."/>
            <person name="Isono K."/>
            <person name="Kuhara S."/>
            <person name="Ogasawara N."/>
            <person name="Kikuchi H."/>
        </authorList>
    </citation>
    <scope>NUCLEOTIDE SEQUENCE [LARGE SCALE GENOMIC DNA]</scope>
    <source>
        <strain>ATCC 42149 / RIB 40</strain>
    </source>
</reference>
<keyword id="KW-0963">Cytoplasm</keyword>
<keyword id="KW-0539">Nucleus</keyword>
<keyword id="KW-0653">Protein transport</keyword>
<keyword id="KW-1185">Reference proteome</keyword>
<keyword id="KW-0813">Transport</keyword>
<organism>
    <name type="scientific">Aspergillus oryzae (strain ATCC 42149 / RIB 40)</name>
    <name type="common">Yellow koji mold</name>
    <dbReference type="NCBI Taxonomy" id="510516"/>
    <lineage>
        <taxon>Eukaryota</taxon>
        <taxon>Fungi</taxon>
        <taxon>Dikarya</taxon>
        <taxon>Ascomycota</taxon>
        <taxon>Pezizomycotina</taxon>
        <taxon>Eurotiomycetes</taxon>
        <taxon>Eurotiomycetidae</taxon>
        <taxon>Eurotiales</taxon>
        <taxon>Aspergillaceae</taxon>
        <taxon>Aspergillus</taxon>
        <taxon>Aspergillus subgen. Circumdati</taxon>
    </lineage>
</organism>